<keyword id="KW-1132">Decay of host mRNAs by virus</keyword>
<keyword id="KW-1262">Eukaryotic host gene expression shutoff by virus</keyword>
<keyword id="KW-1035">Host cytoplasm</keyword>
<keyword id="KW-1190">Host gene expression shutoff by virus</keyword>
<keyword id="KW-1192">Host mRNA suppression by virus</keyword>
<keyword id="KW-1048">Host nucleus</keyword>
<keyword id="KW-0945">Host-virus interaction</keyword>
<keyword id="KW-0688">Ribosomal frameshifting</keyword>
<reference key="1">
    <citation type="journal article" date="1987" name="Virology">
        <title>Structural changes in the haemagglutinin which accompany egg adaptation of an influenza A(H1N1) virus.</title>
        <authorList>
            <person name="Robertson J.S."/>
            <person name="Newman R."/>
            <person name="Oxford J.S."/>
            <person name="Daniels R.S."/>
            <person name="Webster R.G."/>
            <person name="Schild G.C."/>
        </authorList>
    </citation>
    <scope>NUCLEOTIDE SEQUENCE [GENOMIC RNA]</scope>
</reference>
<reference key="2">
    <citation type="journal article" date="1984" name="Virus Res.">
        <title>Nucleotide sequence of RNA segment 3 of the avian influenza A/FPV/Rostock/34 and its comparison with the corresponding segment of human strains A/PR/8/34 and A/NT/60/68.</title>
        <authorList>
            <person name="Robertson J.S."/>
            <person name="Elaine M."/>
            <person name="Robertson St C."/>
            <person name="Roditi I.J."/>
        </authorList>
    </citation>
    <scope>NUCLEOTIDE SEQUENCE [GENOMIC RNA]</scope>
</reference>
<proteinExistence type="inferred from homology"/>
<accession>P0CK89</accession>
<dbReference type="EMBL" id="X17223">
    <property type="status" value="NOT_ANNOTATED_CDS"/>
    <property type="molecule type" value="Genomic_RNA"/>
</dbReference>
<dbReference type="EMBL" id="M21850">
    <property type="status" value="NOT_ANNOTATED_CDS"/>
    <property type="molecule type" value="Genomic_RNA"/>
</dbReference>
<dbReference type="SMR" id="P0CK89"/>
<dbReference type="GO" id="GO:0003723">
    <property type="term" value="F:RNA binding"/>
    <property type="evidence" value="ECO:0007669"/>
    <property type="project" value="InterPro"/>
</dbReference>
<dbReference type="GO" id="GO:0039694">
    <property type="term" value="P:viral RNA genome replication"/>
    <property type="evidence" value="ECO:0007669"/>
    <property type="project" value="InterPro"/>
</dbReference>
<dbReference type="GO" id="GO:0075523">
    <property type="term" value="P:viral translational frameshifting"/>
    <property type="evidence" value="ECO:0007669"/>
    <property type="project" value="UniProtKB-KW"/>
</dbReference>
<dbReference type="FunFam" id="3.40.91.90:FF:000001">
    <property type="entry name" value="Polymerase acidic protein"/>
    <property type="match status" value="1"/>
</dbReference>
<dbReference type="Gene3D" id="3.40.91.90">
    <property type="entry name" value="Influenza RNA-dependent RNA polymerase subunit PA, endonuclease domain"/>
    <property type="match status" value="1"/>
</dbReference>
<dbReference type="InterPro" id="IPR001009">
    <property type="entry name" value="PA/PA-X"/>
</dbReference>
<dbReference type="InterPro" id="IPR038372">
    <property type="entry name" value="PA/PA-X_sf"/>
</dbReference>
<dbReference type="Pfam" id="PF00603">
    <property type="entry name" value="Flu_PA"/>
    <property type="match status" value="1"/>
</dbReference>
<gene>
    <name type="primary">PA</name>
</gene>
<organismHost>
    <name type="scientific">Aves</name>
    <dbReference type="NCBI Taxonomy" id="8782"/>
</organismHost>
<sequence>MEEFVRQCFNPMIVELAEKTMKEYGEDPKIETNKFAAICTHLEVCFMYSDFHFIDERGESKIVESGDPNALLKHRFEIIEGRDRTMAWTVVNSICNTTGVEKPKFLPDLYDYKENRFIEIGVTRREVHIYYLEKANKIKSEKTHIHIFSFTGEEMATKADYTLDEESRARIKTRLFTIRQEMASRGLWDSFVSPREAKRQLKKDLKSQEPCAGLPNKVSHRTSPALKTLEPMWMDSNRTAALRASFLKCPKK</sequence>
<evidence type="ECO:0000250" key="1">
    <source>
        <dbReference type="UniProtKB" id="P0CK64"/>
    </source>
</evidence>
<evidence type="ECO:0000250" key="2">
    <source>
        <dbReference type="UniProtKB" id="P0CK68"/>
    </source>
</evidence>
<evidence type="ECO:0000250" key="3">
    <source>
        <dbReference type="UniProtKB" id="P0DJW8"/>
    </source>
</evidence>
<evidence type="ECO:0000250" key="4">
    <source>
        <dbReference type="UniProtKB" id="P0DXO5"/>
    </source>
</evidence>
<evidence type="ECO:0000305" key="5"/>
<organism>
    <name type="scientific">Influenza A virus (strain A/Fowl plague virus/Rostock/8/1934 H7N1)</name>
    <dbReference type="NCBI Taxonomy" id="392810"/>
    <lineage>
        <taxon>Viruses</taxon>
        <taxon>Riboviria</taxon>
        <taxon>Orthornavirae</taxon>
        <taxon>Negarnaviricota</taxon>
        <taxon>Polyploviricotina</taxon>
        <taxon>Insthoviricetes</taxon>
        <taxon>Articulavirales</taxon>
        <taxon>Orthomyxoviridae</taxon>
        <taxon>Alphainfluenzavirus</taxon>
        <taxon>Alphainfluenzavirus influenzae</taxon>
        <taxon>Influenza A virus</taxon>
    </lineage>
</organism>
<name>PAX_I34A0</name>
<feature type="chain" id="PRO_0000419372" description="Protein PA-X">
    <location>
        <begin position="1"/>
        <end position="252"/>
    </location>
</feature>
<feature type="active site" evidence="2">
    <location>
        <position position="80"/>
    </location>
</feature>
<feature type="active site" evidence="2">
    <location>
        <position position="108"/>
    </location>
</feature>
<feature type="site" description="Important for efficient shutoff activity and nuclear localization" evidence="4">
    <location>
        <position position="195"/>
    </location>
</feature>
<feature type="site" description="Important for efficient shutoff activity and nuclear localization" evidence="4">
    <location>
        <position position="198"/>
    </location>
</feature>
<feature type="site" description="Important for efficient shutoff activity and nuclear localization" evidence="4">
    <location>
        <position position="199"/>
    </location>
</feature>
<feature type="site" description="Important for efficient shutoff activity" evidence="3">
    <location>
        <position position="202"/>
    </location>
</feature>
<feature type="site" description="Important for efficient shutoff activity" evidence="3">
    <location>
        <position position="203"/>
    </location>
</feature>
<feature type="site" description="Important for efficient shutoff activity" evidence="3">
    <location>
        <position position="206"/>
    </location>
</feature>
<protein>
    <recommendedName>
        <fullName>Protein PA-X</fullName>
    </recommendedName>
</protein>
<comment type="function">
    <text evidence="1 4">Plays a major role in the shutoff of the host protein expression by cleaving mRNAs probably via an endonuclease activity. This host shutoff allows the virus to escape from the host antiviral response (By similarity). Hijacks host RNA splicing machinery to selectively target host RNAs containing introns for destruction. This may explain the preferential degradation of RNAs that have undergone co- or post-transcriptional processing (By similarity).</text>
</comment>
<comment type="subcellular location">
    <subcellularLocation>
        <location evidence="4">Host cytoplasm</location>
    </subcellularLocation>
    <subcellularLocation>
        <location evidence="4">Host nucleus</location>
    </subcellularLocation>
</comment>
<comment type="alternative products">
    <event type="ribosomal frameshifting"/>
    <isoform>
        <id>P0CK89-1</id>
        <name>PA-X</name>
        <sequence type="displayed"/>
    </isoform>
    <isoform>
        <id>P12444-1</id>
        <name>PA</name>
        <sequence type="external"/>
    </isoform>
</comment>
<comment type="domain">
    <text evidence="1 4">The probable endonuclease active site in the N-terminus and the basic amino acid cluster in the C-terminus are important for the shutoff activity. The C-terminus acts as a nuclear localization signal (By similarity). The C-terminus is recruited to host protein complexes involved in nuclear Pol II RNA processing (By similarity).</text>
</comment>
<comment type="similarity">
    <text evidence="5">Belongs to the influenza viruses PA-X family.</text>
</comment>